<reference key="1">
    <citation type="journal article" date="2006" name="Appl. Environ. Microbiol.">
        <title>Complete genome sequence of the marine, chemolithoautotrophic, ammonia-oxidizing bacterium Nitrosococcus oceani ATCC 19707.</title>
        <authorList>
            <person name="Klotz M.G."/>
            <person name="Arp D.J."/>
            <person name="Chain P.S.G."/>
            <person name="El-Sheikh A.F."/>
            <person name="Hauser L.J."/>
            <person name="Hommes N.G."/>
            <person name="Larimer F.W."/>
            <person name="Malfatti S.A."/>
            <person name="Norton J.M."/>
            <person name="Poret-Peterson A.T."/>
            <person name="Vergez L.M."/>
            <person name="Ward B.B."/>
        </authorList>
    </citation>
    <scope>NUCLEOTIDE SEQUENCE [LARGE SCALE GENOMIC DNA]</scope>
    <source>
        <strain>ATCC 19707 / BCRC 17464 / JCM 30415 / NCIMB 11848 / C-107</strain>
    </source>
</reference>
<feature type="chain" id="PRO_0000229130" description="2,3-bisphosphoglycerate-dependent phosphoglycerate mutase">
    <location>
        <begin position="1"/>
        <end position="240"/>
    </location>
</feature>
<feature type="active site" description="Tele-phosphohistidine intermediate" evidence="1">
    <location>
        <position position="6"/>
    </location>
</feature>
<feature type="active site" description="Proton donor/acceptor" evidence="1">
    <location>
        <position position="84"/>
    </location>
</feature>
<feature type="binding site" evidence="1">
    <location>
        <begin position="5"/>
        <end position="12"/>
    </location>
    <ligand>
        <name>substrate</name>
    </ligand>
</feature>
<feature type="binding site" evidence="1">
    <location>
        <begin position="18"/>
        <end position="19"/>
    </location>
    <ligand>
        <name>substrate</name>
    </ligand>
</feature>
<feature type="binding site" evidence="1">
    <location>
        <position position="57"/>
    </location>
    <ligand>
        <name>substrate</name>
    </ligand>
</feature>
<feature type="binding site" evidence="1">
    <location>
        <begin position="84"/>
        <end position="87"/>
    </location>
    <ligand>
        <name>substrate</name>
    </ligand>
</feature>
<feature type="binding site" evidence="1">
    <location>
        <position position="95"/>
    </location>
    <ligand>
        <name>substrate</name>
    </ligand>
</feature>
<feature type="binding site" evidence="1">
    <location>
        <begin position="111"/>
        <end position="112"/>
    </location>
    <ligand>
        <name>substrate</name>
    </ligand>
</feature>
<feature type="binding site" evidence="1">
    <location>
        <begin position="180"/>
        <end position="181"/>
    </location>
    <ligand>
        <name>substrate</name>
    </ligand>
</feature>
<feature type="site" description="Transition state stabilizer" evidence="1">
    <location>
        <position position="179"/>
    </location>
</feature>
<comment type="function">
    <text evidence="1">Catalyzes the interconversion of 2-phosphoglycerate and 3-phosphoglycerate.</text>
</comment>
<comment type="catalytic activity">
    <reaction evidence="1">
        <text>(2R)-2-phosphoglycerate = (2R)-3-phosphoglycerate</text>
        <dbReference type="Rhea" id="RHEA:15901"/>
        <dbReference type="ChEBI" id="CHEBI:58272"/>
        <dbReference type="ChEBI" id="CHEBI:58289"/>
        <dbReference type="EC" id="5.4.2.11"/>
    </reaction>
</comment>
<comment type="pathway">
    <text evidence="1">Carbohydrate degradation; glycolysis; pyruvate from D-glyceraldehyde 3-phosphate: step 3/5.</text>
</comment>
<comment type="subunit">
    <text evidence="1">Homodimer.</text>
</comment>
<comment type="similarity">
    <text evidence="1">Belongs to the phosphoglycerate mutase family. BPG-dependent PGAM subfamily.</text>
</comment>
<dbReference type="EC" id="5.4.2.11" evidence="1"/>
<dbReference type="EMBL" id="CP000127">
    <property type="protein sequence ID" value="ABA57888.1"/>
    <property type="molecule type" value="Genomic_DNA"/>
</dbReference>
<dbReference type="RefSeq" id="WP_002808909.1">
    <property type="nucleotide sequence ID" value="NC_007484.1"/>
</dbReference>
<dbReference type="SMR" id="Q3JBA8"/>
<dbReference type="FunCoup" id="Q3JBA8">
    <property type="interactions" value="447"/>
</dbReference>
<dbReference type="STRING" id="323261.Noc_1395"/>
<dbReference type="KEGG" id="noc:Noc_1395"/>
<dbReference type="eggNOG" id="COG0588">
    <property type="taxonomic scope" value="Bacteria"/>
</dbReference>
<dbReference type="HOGENOM" id="CLU_033323_1_1_6"/>
<dbReference type="InParanoid" id="Q3JBA8"/>
<dbReference type="UniPathway" id="UPA00109">
    <property type="reaction ID" value="UER00186"/>
</dbReference>
<dbReference type="Proteomes" id="UP000006838">
    <property type="component" value="Chromosome"/>
</dbReference>
<dbReference type="GO" id="GO:0004619">
    <property type="term" value="F:phosphoglycerate mutase activity"/>
    <property type="evidence" value="ECO:0007669"/>
    <property type="project" value="UniProtKB-EC"/>
</dbReference>
<dbReference type="GO" id="GO:0006094">
    <property type="term" value="P:gluconeogenesis"/>
    <property type="evidence" value="ECO:0007669"/>
    <property type="project" value="UniProtKB-UniRule"/>
</dbReference>
<dbReference type="GO" id="GO:0006096">
    <property type="term" value="P:glycolytic process"/>
    <property type="evidence" value="ECO:0007669"/>
    <property type="project" value="UniProtKB-UniRule"/>
</dbReference>
<dbReference type="CDD" id="cd07067">
    <property type="entry name" value="HP_PGM_like"/>
    <property type="match status" value="1"/>
</dbReference>
<dbReference type="FunFam" id="3.40.50.1240:FF:000003">
    <property type="entry name" value="2,3-bisphosphoglycerate-dependent phosphoglycerate mutase"/>
    <property type="match status" value="1"/>
</dbReference>
<dbReference type="Gene3D" id="3.40.50.1240">
    <property type="entry name" value="Phosphoglycerate mutase-like"/>
    <property type="match status" value="1"/>
</dbReference>
<dbReference type="HAMAP" id="MF_01039">
    <property type="entry name" value="PGAM_GpmA"/>
    <property type="match status" value="1"/>
</dbReference>
<dbReference type="InterPro" id="IPR013078">
    <property type="entry name" value="His_Pase_superF_clade-1"/>
</dbReference>
<dbReference type="InterPro" id="IPR029033">
    <property type="entry name" value="His_PPase_superfam"/>
</dbReference>
<dbReference type="InterPro" id="IPR001345">
    <property type="entry name" value="PG/BPGM_mutase_AS"/>
</dbReference>
<dbReference type="InterPro" id="IPR005952">
    <property type="entry name" value="Phosphogly_mut1"/>
</dbReference>
<dbReference type="NCBIfam" id="TIGR01258">
    <property type="entry name" value="pgm_1"/>
    <property type="match status" value="1"/>
</dbReference>
<dbReference type="NCBIfam" id="NF010713">
    <property type="entry name" value="PRK14115.1"/>
    <property type="match status" value="1"/>
</dbReference>
<dbReference type="PANTHER" id="PTHR11931">
    <property type="entry name" value="PHOSPHOGLYCERATE MUTASE"/>
    <property type="match status" value="1"/>
</dbReference>
<dbReference type="Pfam" id="PF00300">
    <property type="entry name" value="His_Phos_1"/>
    <property type="match status" value="2"/>
</dbReference>
<dbReference type="PIRSF" id="PIRSF000709">
    <property type="entry name" value="6PFK_2-Ptase"/>
    <property type="match status" value="1"/>
</dbReference>
<dbReference type="SMART" id="SM00855">
    <property type="entry name" value="PGAM"/>
    <property type="match status" value="1"/>
</dbReference>
<dbReference type="SUPFAM" id="SSF53254">
    <property type="entry name" value="Phosphoglycerate mutase-like"/>
    <property type="match status" value="1"/>
</dbReference>
<dbReference type="PROSITE" id="PS00175">
    <property type="entry name" value="PG_MUTASE"/>
    <property type="match status" value="1"/>
</dbReference>
<accession>Q3JBA8</accession>
<protein>
    <recommendedName>
        <fullName evidence="1">2,3-bisphosphoglycerate-dependent phosphoglycerate mutase</fullName>
        <shortName evidence="1">BPG-dependent PGAM</shortName>
        <shortName evidence="1">PGAM</shortName>
        <shortName evidence="1">Phosphoglyceromutase</shortName>
        <shortName evidence="1">dPGM</shortName>
        <ecNumber evidence="1">5.4.2.11</ecNumber>
    </recommendedName>
</protein>
<organism>
    <name type="scientific">Nitrosococcus oceani (strain ATCC 19707 / BCRC 17464 / JCM 30415 / NCIMB 11848 / C-107)</name>
    <dbReference type="NCBI Taxonomy" id="323261"/>
    <lineage>
        <taxon>Bacteria</taxon>
        <taxon>Pseudomonadati</taxon>
        <taxon>Pseudomonadota</taxon>
        <taxon>Gammaproteobacteria</taxon>
        <taxon>Chromatiales</taxon>
        <taxon>Chromatiaceae</taxon>
        <taxon>Nitrosococcus</taxon>
    </lineage>
</organism>
<gene>
    <name evidence="1" type="primary">gpmA</name>
    <name type="ordered locus">Noc_1395</name>
</gene>
<proteinExistence type="inferred from homology"/>
<name>GPMA_NITOC</name>
<evidence type="ECO:0000255" key="1">
    <source>
        <dbReference type="HAMAP-Rule" id="MF_01039"/>
    </source>
</evidence>
<sequence length="240" mass="27447">MILLRHGESVWNLENRFTGWTDVDLSANGVEEARLAGKILKNEGYQFDKAYTSVLKRAIRTLWIVEEMMDLVWLPVEKRWELNERHYGNLQGLNKAEMAKQYGAELVHQWRRGYGIEPPPLDNSDPRHPRFDRRYAGLAPEALPASESLKKTLKRVIPCWKQHILPDIAAGKELIIVAHGNSLRALYKHLEGLSDQEVMELNIPTGIPLVFELDSAFRPTAHYYLADSEKSQVVIGDTAH</sequence>
<keyword id="KW-0312">Gluconeogenesis</keyword>
<keyword id="KW-0324">Glycolysis</keyword>
<keyword id="KW-0413">Isomerase</keyword>
<keyword id="KW-1185">Reference proteome</keyword>